<organism>
    <name type="scientific">Pelagibacter ubique (strain HTCC1062)</name>
    <dbReference type="NCBI Taxonomy" id="335992"/>
    <lineage>
        <taxon>Bacteria</taxon>
        <taxon>Pseudomonadati</taxon>
        <taxon>Pseudomonadota</taxon>
        <taxon>Alphaproteobacteria</taxon>
        <taxon>Candidatus Pelagibacterales</taxon>
        <taxon>Candidatus Pelagibacteraceae</taxon>
        <taxon>Candidatus Pelagibacter</taxon>
    </lineage>
</organism>
<feature type="chain" id="PRO_0000268427" description="Bifunctional protein FolD">
    <location>
        <begin position="1"/>
        <end position="281"/>
    </location>
</feature>
<feature type="binding site" evidence="1">
    <location>
        <begin position="164"/>
        <end position="166"/>
    </location>
    <ligand>
        <name>NADP(+)</name>
        <dbReference type="ChEBI" id="CHEBI:58349"/>
    </ligand>
</feature>
<feature type="binding site" evidence="1">
    <location>
        <position position="189"/>
    </location>
    <ligand>
        <name>NADP(+)</name>
        <dbReference type="ChEBI" id="CHEBI:58349"/>
    </ligand>
</feature>
<feature type="binding site" evidence="1">
    <location>
        <position position="230"/>
    </location>
    <ligand>
        <name>NADP(+)</name>
        <dbReference type="ChEBI" id="CHEBI:58349"/>
    </ligand>
</feature>
<protein>
    <recommendedName>
        <fullName evidence="1">Bifunctional protein FolD</fullName>
    </recommendedName>
    <domain>
        <recommendedName>
            <fullName evidence="1">Methylenetetrahydrofolate dehydrogenase</fullName>
            <ecNumber evidence="1">1.5.1.5</ecNumber>
        </recommendedName>
    </domain>
    <domain>
        <recommendedName>
            <fullName evidence="1">Methenyltetrahydrofolate cyclohydrolase</fullName>
            <ecNumber evidence="1">3.5.4.9</ecNumber>
        </recommendedName>
    </domain>
</protein>
<dbReference type="EC" id="1.5.1.5" evidence="1"/>
<dbReference type="EC" id="3.5.4.9" evidence="1"/>
<dbReference type="EMBL" id="CP000084">
    <property type="protein sequence ID" value="AAZ21128.1"/>
    <property type="molecule type" value="Genomic_DNA"/>
</dbReference>
<dbReference type="RefSeq" id="WP_011281620.1">
    <property type="nucleotide sequence ID" value="NC_007205.1"/>
</dbReference>
<dbReference type="SMR" id="Q4FNW1"/>
<dbReference type="STRING" id="335992.SAR11_0307"/>
<dbReference type="GeneID" id="66294803"/>
<dbReference type="KEGG" id="pub:SAR11_0307"/>
<dbReference type="eggNOG" id="COG0190">
    <property type="taxonomic scope" value="Bacteria"/>
</dbReference>
<dbReference type="HOGENOM" id="CLU_034045_2_1_5"/>
<dbReference type="OrthoDB" id="9803580at2"/>
<dbReference type="UniPathway" id="UPA00193"/>
<dbReference type="Proteomes" id="UP000002528">
    <property type="component" value="Chromosome"/>
</dbReference>
<dbReference type="GO" id="GO:0005829">
    <property type="term" value="C:cytosol"/>
    <property type="evidence" value="ECO:0007669"/>
    <property type="project" value="TreeGrafter"/>
</dbReference>
<dbReference type="GO" id="GO:0004477">
    <property type="term" value="F:methenyltetrahydrofolate cyclohydrolase activity"/>
    <property type="evidence" value="ECO:0007669"/>
    <property type="project" value="UniProtKB-UniRule"/>
</dbReference>
<dbReference type="GO" id="GO:0004488">
    <property type="term" value="F:methylenetetrahydrofolate dehydrogenase (NADP+) activity"/>
    <property type="evidence" value="ECO:0007669"/>
    <property type="project" value="UniProtKB-UniRule"/>
</dbReference>
<dbReference type="GO" id="GO:0000105">
    <property type="term" value="P:L-histidine biosynthetic process"/>
    <property type="evidence" value="ECO:0007669"/>
    <property type="project" value="UniProtKB-KW"/>
</dbReference>
<dbReference type="GO" id="GO:0009086">
    <property type="term" value="P:methionine biosynthetic process"/>
    <property type="evidence" value="ECO:0007669"/>
    <property type="project" value="UniProtKB-KW"/>
</dbReference>
<dbReference type="GO" id="GO:0006164">
    <property type="term" value="P:purine nucleotide biosynthetic process"/>
    <property type="evidence" value="ECO:0007669"/>
    <property type="project" value="UniProtKB-KW"/>
</dbReference>
<dbReference type="GO" id="GO:0035999">
    <property type="term" value="P:tetrahydrofolate interconversion"/>
    <property type="evidence" value="ECO:0007669"/>
    <property type="project" value="UniProtKB-UniRule"/>
</dbReference>
<dbReference type="CDD" id="cd01080">
    <property type="entry name" value="NAD_bind_m-THF_DH_Cyclohyd"/>
    <property type="match status" value="1"/>
</dbReference>
<dbReference type="FunFam" id="3.40.50.720:FF:000094">
    <property type="entry name" value="Bifunctional protein FolD"/>
    <property type="match status" value="1"/>
</dbReference>
<dbReference type="FunFam" id="3.40.50.10860:FF:000005">
    <property type="entry name" value="C-1-tetrahydrofolate synthase, cytoplasmic, putative"/>
    <property type="match status" value="1"/>
</dbReference>
<dbReference type="Gene3D" id="3.40.50.10860">
    <property type="entry name" value="Leucine Dehydrogenase, chain A, domain 1"/>
    <property type="match status" value="1"/>
</dbReference>
<dbReference type="Gene3D" id="3.40.50.720">
    <property type="entry name" value="NAD(P)-binding Rossmann-like Domain"/>
    <property type="match status" value="1"/>
</dbReference>
<dbReference type="HAMAP" id="MF_01576">
    <property type="entry name" value="THF_DHG_CYH"/>
    <property type="match status" value="1"/>
</dbReference>
<dbReference type="InterPro" id="IPR046346">
    <property type="entry name" value="Aminoacid_DH-like_N_sf"/>
</dbReference>
<dbReference type="InterPro" id="IPR036291">
    <property type="entry name" value="NAD(P)-bd_dom_sf"/>
</dbReference>
<dbReference type="InterPro" id="IPR000672">
    <property type="entry name" value="THF_DH/CycHdrlase"/>
</dbReference>
<dbReference type="InterPro" id="IPR020630">
    <property type="entry name" value="THF_DH/CycHdrlase_cat_dom"/>
</dbReference>
<dbReference type="InterPro" id="IPR020867">
    <property type="entry name" value="THF_DH/CycHdrlase_CS"/>
</dbReference>
<dbReference type="InterPro" id="IPR020631">
    <property type="entry name" value="THF_DH/CycHdrlase_NAD-bd_dom"/>
</dbReference>
<dbReference type="PANTHER" id="PTHR48099:SF5">
    <property type="entry name" value="C-1-TETRAHYDROFOLATE SYNTHASE, CYTOPLASMIC"/>
    <property type="match status" value="1"/>
</dbReference>
<dbReference type="PANTHER" id="PTHR48099">
    <property type="entry name" value="C-1-TETRAHYDROFOLATE SYNTHASE, CYTOPLASMIC-RELATED"/>
    <property type="match status" value="1"/>
</dbReference>
<dbReference type="Pfam" id="PF00763">
    <property type="entry name" value="THF_DHG_CYH"/>
    <property type="match status" value="1"/>
</dbReference>
<dbReference type="Pfam" id="PF02882">
    <property type="entry name" value="THF_DHG_CYH_C"/>
    <property type="match status" value="1"/>
</dbReference>
<dbReference type="PRINTS" id="PR00085">
    <property type="entry name" value="THFDHDRGNASE"/>
</dbReference>
<dbReference type="SUPFAM" id="SSF53223">
    <property type="entry name" value="Aminoacid dehydrogenase-like, N-terminal domain"/>
    <property type="match status" value="1"/>
</dbReference>
<dbReference type="SUPFAM" id="SSF51735">
    <property type="entry name" value="NAD(P)-binding Rossmann-fold domains"/>
    <property type="match status" value="1"/>
</dbReference>
<dbReference type="PROSITE" id="PS00767">
    <property type="entry name" value="THF_DHG_CYH_2"/>
    <property type="match status" value="1"/>
</dbReference>
<reference key="1">
    <citation type="journal article" date="2005" name="Science">
        <title>Genome streamlining in a cosmopolitan oceanic bacterium.</title>
        <authorList>
            <person name="Giovannoni S.J."/>
            <person name="Tripp H.J."/>
            <person name="Givan S."/>
            <person name="Podar M."/>
            <person name="Vergin K.L."/>
            <person name="Baptista D."/>
            <person name="Bibbs L."/>
            <person name="Eads J."/>
            <person name="Richardson T.H."/>
            <person name="Noordewier M."/>
            <person name="Rappe M.S."/>
            <person name="Short J.M."/>
            <person name="Carrington J.C."/>
            <person name="Mathur E.J."/>
        </authorList>
    </citation>
    <scope>NUCLEOTIDE SEQUENCE [LARGE SCALE GENOMIC DNA]</scope>
    <source>
        <strain>HTCC1062</strain>
    </source>
</reference>
<keyword id="KW-0028">Amino-acid biosynthesis</keyword>
<keyword id="KW-0368">Histidine biosynthesis</keyword>
<keyword id="KW-0378">Hydrolase</keyword>
<keyword id="KW-0486">Methionine biosynthesis</keyword>
<keyword id="KW-0511">Multifunctional enzyme</keyword>
<keyword id="KW-0521">NADP</keyword>
<keyword id="KW-0554">One-carbon metabolism</keyword>
<keyword id="KW-0560">Oxidoreductase</keyword>
<keyword id="KW-0658">Purine biosynthesis</keyword>
<keyword id="KW-1185">Reference proteome</keyword>
<evidence type="ECO:0000255" key="1">
    <source>
        <dbReference type="HAMAP-Rule" id="MF_01576"/>
    </source>
</evidence>
<comment type="function">
    <text evidence="1">Catalyzes the oxidation of 5,10-methylenetetrahydrofolate to 5,10-methenyltetrahydrofolate and then the hydrolysis of 5,10-methenyltetrahydrofolate to 10-formyltetrahydrofolate.</text>
</comment>
<comment type="catalytic activity">
    <reaction evidence="1">
        <text>(6R)-5,10-methylene-5,6,7,8-tetrahydrofolate + NADP(+) = (6R)-5,10-methenyltetrahydrofolate + NADPH</text>
        <dbReference type="Rhea" id="RHEA:22812"/>
        <dbReference type="ChEBI" id="CHEBI:15636"/>
        <dbReference type="ChEBI" id="CHEBI:57455"/>
        <dbReference type="ChEBI" id="CHEBI:57783"/>
        <dbReference type="ChEBI" id="CHEBI:58349"/>
        <dbReference type="EC" id="1.5.1.5"/>
    </reaction>
</comment>
<comment type="catalytic activity">
    <reaction evidence="1">
        <text>(6R)-5,10-methenyltetrahydrofolate + H2O = (6R)-10-formyltetrahydrofolate + H(+)</text>
        <dbReference type="Rhea" id="RHEA:23700"/>
        <dbReference type="ChEBI" id="CHEBI:15377"/>
        <dbReference type="ChEBI" id="CHEBI:15378"/>
        <dbReference type="ChEBI" id="CHEBI:57455"/>
        <dbReference type="ChEBI" id="CHEBI:195366"/>
        <dbReference type="EC" id="3.5.4.9"/>
    </reaction>
</comment>
<comment type="pathway">
    <text evidence="1">One-carbon metabolism; tetrahydrofolate interconversion.</text>
</comment>
<comment type="subunit">
    <text evidence="1">Homodimer.</text>
</comment>
<comment type="similarity">
    <text evidence="1">Belongs to the tetrahydrofolate dehydrogenase/cyclohydrolase family.</text>
</comment>
<proteinExistence type="inferred from homology"/>
<accession>Q4FNW1</accession>
<gene>
    <name evidence="1" type="primary">folD</name>
    <name type="ordered locus">SAR11_0307</name>
</gene>
<name>FOLD_PELUB</name>
<sequence length="281" mass="30666">MILIDGKKIAAELREQLRQEVVELKAKHNKIPGLTVILIGEMAPSQIYVRMKEKAANEVGLKSEVIRYPEAVEEKTVLDKIEELNKDESISGILVQLPLPKHIDKQKVIETILPGKDVDGFHPMNVGNLSSGYESSVPCTPLGCYLMIKKIEPNLSGKKAVMIGRSNLNGKPMAQLLLKENCTVTITHSKTKDLKAECLEADIIVAAVGIPELVKADWVKKDAIVIDVGINKTENGIVGDVAFEEVSKVARALTPVPGGVGPMTIACLLKNTIECFKRSQK</sequence>